<name>TDRD7_XENTR</name>
<reference key="1">
    <citation type="submission" date="2004-12" db="EMBL/GenBank/DDBJ databases">
        <authorList>
            <consortium name="NIH - Xenopus Gene Collection (XGC) project"/>
        </authorList>
    </citation>
    <scope>NUCLEOTIDE SEQUENCE [LARGE SCALE MRNA]</scope>
    <source>
        <tissue>Embryo</tissue>
    </source>
</reference>
<sequence>MLRAVLQANKNGVPLSKLQAEYKSFTGEPIPFKDMGFHALDAYLKSIPSVVRIEVSRVGEVICYAVVCKETARIAALVAHQRSSKKKSGGQVNCQMRLKYTAPVSHFGKPKATLRQPGFTPPQEKIIRKPVPTSAWGKGNTFGSRTFEYSPPPIPQLFGIAPIQMHLPNINRPERKVTLPPRFQREVNSFLNPTPMTDSNANHTQSLKSVVPGSGQPRCDLSVIQNNLKELLNKHSNGLWLSKLPQLYKETYKQDLGGEMLKQVPSWTHICMVQKLVTMGHTEMVLYSTAIKQPSFTKNVQNHSNNQAKPNVPVDSTPSSPPLQSSGNIPKDELKQKISKVLTKYSNGLWYHALPKVFEDMFKQKLPTEVLNLDSLTDICTVDLISEEPFKAILYAKSAERANQNSNPSVNNNIPQKLQDRESPLLPEEPEMNMTPPPLVIPSEASPSVLVVELSSTNDVVIRYIGRDYSAAQEHMEDEMKDFCSKSSTAKIGFLRVGQLVAAKAEEDVWLRAQISAIEGKKVKVCYVDYGFSEIVDITKVCKLGKQFYTLPFQATKCRLAGLEAFCDDSIIIKALELKACGKILAVEILEKSEKPLVVLYDTSGDDDININAACLKELCDRSLSLQLKANSSFSNVIVTNVCSDGTLFCQLPSKGLAKLYETLQKVDSEFQSKQVTSHLYVSLPFCGKICLYHYKGKWARVEITSVHSSRALDVQFLDSGTIASVKVSELKEIPPPLLRDLISIPPQALRCCLADLPLRIGMWTPDAVLWLRNTVLNCLECSIRVVKVDEATNMVHIYLFTSNNFPDLERSINRQITNEELWKHQKDVFLNLSASTLESSRGGGAQASELSPPGLCKDHTSAVKKPDMQQSSSVPSFNMPPPLPLPRPGEHMDVFVSVACHPGHFVCQPWQELHKLEVVMEEMLLHYSTTEEKPVALEKNKLYAAKVENKWYRVLVKGILTNGLVSVYELDYGRHELVSCRKVQPLIEKFMQLPFQAITSQLAGVSCEHWSEEASIVFRNHVEKKPLVALVQTIHESTHPWDRRAVAYIVDTSLPDTDIWIHELMTEYHIQLSKPE</sequence>
<comment type="function">
    <text evidence="1">Component of specific cytoplasmic RNA granules involved in post-transcriptional regulation of specific genes: probably acts by binding to specific mRNAs and regulating their translation. Probably required during spermatogenesis (By similarity).</text>
</comment>
<comment type="subcellular location">
    <subcellularLocation>
        <location>Cytoplasm</location>
    </subcellularLocation>
    <text evidence="1">Localizes to cytoplasmic RNA granules.</text>
</comment>
<comment type="similarity">
    <text evidence="5">Belongs to the TDRD7 family.</text>
</comment>
<proteinExistence type="evidence at transcript level"/>
<keyword id="KW-0963">Cytoplasm</keyword>
<keyword id="KW-0221">Differentiation</keyword>
<keyword id="KW-1185">Reference proteome</keyword>
<keyword id="KW-0677">Repeat</keyword>
<keyword id="KW-0694">RNA-binding</keyword>
<keyword id="KW-0744">Spermatogenesis</keyword>
<accession>Q5M7P8</accession>
<dbReference type="EMBL" id="BC088519">
    <property type="protein sequence ID" value="AAH88519.1"/>
    <property type="molecule type" value="mRNA"/>
</dbReference>
<dbReference type="RefSeq" id="NP_001011355.2">
    <property type="nucleotide sequence ID" value="NM_001011355.2"/>
</dbReference>
<dbReference type="SMR" id="Q5M7P8"/>
<dbReference type="FunCoup" id="Q5M7P8">
    <property type="interactions" value="494"/>
</dbReference>
<dbReference type="STRING" id="8364.ENSXETP00000005565"/>
<dbReference type="PaxDb" id="8364-ENSXETP00000062111"/>
<dbReference type="GeneID" id="496822"/>
<dbReference type="KEGG" id="xtr:496822"/>
<dbReference type="AGR" id="Xenbase:XB-GENE-944683"/>
<dbReference type="CTD" id="23424"/>
<dbReference type="Xenbase" id="XB-GENE-944683">
    <property type="gene designation" value="tdrd7"/>
</dbReference>
<dbReference type="eggNOG" id="KOG2039">
    <property type="taxonomic scope" value="Eukaryota"/>
</dbReference>
<dbReference type="InParanoid" id="Q5M7P8"/>
<dbReference type="OrthoDB" id="10034606at2759"/>
<dbReference type="Proteomes" id="UP000008143">
    <property type="component" value="Chromosome 1"/>
</dbReference>
<dbReference type="GO" id="GO:0005737">
    <property type="term" value="C:cytoplasm"/>
    <property type="evidence" value="ECO:0000266"/>
    <property type="project" value="Xenbase"/>
</dbReference>
<dbReference type="GO" id="GO:0035770">
    <property type="term" value="C:ribonucleoprotein granule"/>
    <property type="evidence" value="ECO:0000250"/>
    <property type="project" value="UniProtKB"/>
</dbReference>
<dbReference type="GO" id="GO:0003729">
    <property type="term" value="F:mRNA binding"/>
    <property type="evidence" value="ECO:0000250"/>
    <property type="project" value="UniProtKB"/>
</dbReference>
<dbReference type="GO" id="GO:0070307">
    <property type="term" value="P:lens fiber cell development"/>
    <property type="evidence" value="ECO:0000315"/>
    <property type="project" value="Xenbase"/>
</dbReference>
<dbReference type="GO" id="GO:0070306">
    <property type="term" value="P:lens fiber cell differentiation"/>
    <property type="evidence" value="ECO:0000250"/>
    <property type="project" value="UniProtKB"/>
</dbReference>
<dbReference type="GO" id="GO:0002089">
    <property type="term" value="P:lens morphogenesis in camera-type eye"/>
    <property type="evidence" value="ECO:0000250"/>
    <property type="project" value="UniProtKB"/>
</dbReference>
<dbReference type="GO" id="GO:0010608">
    <property type="term" value="P:post-transcriptional regulation of gene expression"/>
    <property type="evidence" value="ECO:0000250"/>
    <property type="project" value="UniProtKB"/>
</dbReference>
<dbReference type="GO" id="GO:0007283">
    <property type="term" value="P:spermatogenesis"/>
    <property type="evidence" value="ECO:0000250"/>
    <property type="project" value="UniProtKB"/>
</dbReference>
<dbReference type="CDD" id="cd09974">
    <property type="entry name" value="LOTUS_3_TDRD7"/>
    <property type="match status" value="1"/>
</dbReference>
<dbReference type="CDD" id="cd20428">
    <property type="entry name" value="Tudor_TDRD7_rpt2"/>
    <property type="match status" value="1"/>
</dbReference>
<dbReference type="CDD" id="cd20429">
    <property type="entry name" value="Tudor_TDRD7_rpt3"/>
    <property type="match status" value="1"/>
</dbReference>
<dbReference type="FunFam" id="2.30.30.140:FF:000065">
    <property type="entry name" value="tudor domain-containing protein 7"/>
    <property type="match status" value="1"/>
</dbReference>
<dbReference type="FunFam" id="2.30.30.140:FF:000045">
    <property type="entry name" value="tudor domain-containing protein 7 isoform X1"/>
    <property type="match status" value="1"/>
</dbReference>
<dbReference type="FunFam" id="2.30.30.140:FF:000053">
    <property type="entry name" value="tudor domain-containing protein 7 isoform X2"/>
    <property type="match status" value="1"/>
</dbReference>
<dbReference type="Gene3D" id="2.30.30.140">
    <property type="match status" value="3"/>
</dbReference>
<dbReference type="Gene3D" id="2.40.50.90">
    <property type="match status" value="3"/>
</dbReference>
<dbReference type="Gene3D" id="3.30.420.610">
    <property type="entry name" value="LOTUS domain-like"/>
    <property type="match status" value="3"/>
</dbReference>
<dbReference type="InterPro" id="IPR041966">
    <property type="entry name" value="LOTUS-like"/>
</dbReference>
<dbReference type="InterPro" id="IPR025605">
    <property type="entry name" value="OST-HTH/LOTUS_dom"/>
</dbReference>
<dbReference type="InterPro" id="IPR035437">
    <property type="entry name" value="SNase_OB-fold_sf"/>
</dbReference>
<dbReference type="InterPro" id="IPR037978">
    <property type="entry name" value="TDRD7_LOTUS_3"/>
</dbReference>
<dbReference type="InterPro" id="IPR002999">
    <property type="entry name" value="Tudor"/>
</dbReference>
<dbReference type="InterPro" id="IPR050621">
    <property type="entry name" value="Tudor_domain_containing"/>
</dbReference>
<dbReference type="InterPro" id="IPR047448">
    <property type="entry name" value="Tudor_TDRD7_rpt2"/>
</dbReference>
<dbReference type="InterPro" id="IPR047449">
    <property type="entry name" value="Tudor_TDRD7_rpt3"/>
</dbReference>
<dbReference type="PANTHER" id="PTHR22948:SF76">
    <property type="entry name" value="FI20010P1-RELATED"/>
    <property type="match status" value="1"/>
</dbReference>
<dbReference type="PANTHER" id="PTHR22948">
    <property type="entry name" value="TUDOR DOMAIN CONTAINING PROTEIN"/>
    <property type="match status" value="1"/>
</dbReference>
<dbReference type="Pfam" id="PF12872">
    <property type="entry name" value="OST-HTH"/>
    <property type="match status" value="2"/>
</dbReference>
<dbReference type="Pfam" id="PF00567">
    <property type="entry name" value="TUDOR"/>
    <property type="match status" value="3"/>
</dbReference>
<dbReference type="SMART" id="SM00333">
    <property type="entry name" value="TUDOR"/>
    <property type="match status" value="3"/>
</dbReference>
<dbReference type="SUPFAM" id="SSF63748">
    <property type="entry name" value="Tudor/PWWP/MBT"/>
    <property type="match status" value="3"/>
</dbReference>
<dbReference type="PROSITE" id="PS51644">
    <property type="entry name" value="HTH_OST"/>
    <property type="match status" value="3"/>
</dbReference>
<dbReference type="PROSITE" id="PS50304">
    <property type="entry name" value="TUDOR"/>
    <property type="match status" value="2"/>
</dbReference>
<feature type="chain" id="PRO_0000409521" description="Tudor domain-containing protein 7">
    <location>
        <begin position="1"/>
        <end position="1077"/>
    </location>
</feature>
<feature type="domain" description="HTH OST-type 1" evidence="3">
    <location>
        <begin position="1"/>
        <end position="67"/>
    </location>
</feature>
<feature type="domain" description="HTH OST-type 2" evidence="3">
    <location>
        <begin position="220"/>
        <end position="289"/>
    </location>
</feature>
<feature type="domain" description="HTH OST-type 3" evidence="3">
    <location>
        <begin position="330"/>
        <end position="398"/>
    </location>
</feature>
<feature type="domain" description="Tudor 1" evidence="2">
    <location>
        <begin position="494"/>
        <end position="551"/>
    </location>
</feature>
<feature type="domain" description="Tudor 2" evidence="2">
    <location>
        <begin position="684"/>
        <end position="741"/>
    </location>
</feature>
<feature type="region of interest" description="Disordered" evidence="4">
    <location>
        <begin position="300"/>
        <end position="331"/>
    </location>
</feature>
<feature type="region of interest" description="Disordered" evidence="4">
    <location>
        <begin position="841"/>
        <end position="883"/>
    </location>
</feature>
<feature type="compositionally biased region" description="Polar residues" evidence="4">
    <location>
        <begin position="300"/>
        <end position="328"/>
    </location>
</feature>
<feature type="compositionally biased region" description="Basic and acidic residues" evidence="4">
    <location>
        <begin position="857"/>
        <end position="868"/>
    </location>
</feature>
<evidence type="ECO:0000250" key="1"/>
<evidence type="ECO:0000255" key="2">
    <source>
        <dbReference type="PROSITE-ProRule" id="PRU00211"/>
    </source>
</evidence>
<evidence type="ECO:0000255" key="3">
    <source>
        <dbReference type="PROSITE-ProRule" id="PRU00975"/>
    </source>
</evidence>
<evidence type="ECO:0000256" key="4">
    <source>
        <dbReference type="SAM" id="MobiDB-lite"/>
    </source>
</evidence>
<evidence type="ECO:0000305" key="5"/>
<gene>
    <name type="primary">tdrd7</name>
</gene>
<organism>
    <name type="scientific">Xenopus tropicalis</name>
    <name type="common">Western clawed frog</name>
    <name type="synonym">Silurana tropicalis</name>
    <dbReference type="NCBI Taxonomy" id="8364"/>
    <lineage>
        <taxon>Eukaryota</taxon>
        <taxon>Metazoa</taxon>
        <taxon>Chordata</taxon>
        <taxon>Craniata</taxon>
        <taxon>Vertebrata</taxon>
        <taxon>Euteleostomi</taxon>
        <taxon>Amphibia</taxon>
        <taxon>Batrachia</taxon>
        <taxon>Anura</taxon>
        <taxon>Pipoidea</taxon>
        <taxon>Pipidae</taxon>
        <taxon>Xenopodinae</taxon>
        <taxon>Xenopus</taxon>
        <taxon>Silurana</taxon>
    </lineage>
</organism>
<protein>
    <recommendedName>
        <fullName>Tudor domain-containing protein 7</fullName>
    </recommendedName>
</protein>